<accession>P02262</accession>
<sequence length="130" mass="14077">MSGRGKQGGKARAKAKSRSSRAGLQFPVGRVHRLLRKGNYAERVGAGAPVYLAAVLEYLTAEILELAGNAARDNKKTRIIPRHLQLAIRNDEELNKLLGKVTIAQGGVLPNIQAVLLPKKTESHHKAKGK</sequence>
<dbReference type="PDB" id="8RBX">
    <property type="method" value="EM"/>
    <property type="resolution" value="4.10 A"/>
    <property type="chains" value="Q/V=1-130"/>
</dbReference>
<dbReference type="PDBsum" id="8RBX"/>
<dbReference type="EMDB" id="EMD-19038"/>
<dbReference type="SMR" id="P02262"/>
<dbReference type="FunCoup" id="P02262">
    <property type="interactions" value="1197"/>
</dbReference>
<dbReference type="IntAct" id="P02262">
    <property type="interactions" value="2"/>
</dbReference>
<dbReference type="MINT" id="P02262"/>
<dbReference type="iPTMnet" id="P02262"/>
<dbReference type="jPOST" id="P02262"/>
<dbReference type="UCSC" id="RGD:1584037">
    <property type="organism name" value="rat"/>
</dbReference>
<dbReference type="AGR" id="RGD:1307165"/>
<dbReference type="InParanoid" id="P02262"/>
<dbReference type="Proteomes" id="UP000002494">
    <property type="component" value="Unplaced"/>
</dbReference>
<dbReference type="GO" id="GO:0000786">
    <property type="term" value="C:nucleosome"/>
    <property type="evidence" value="ECO:0000318"/>
    <property type="project" value="GO_Central"/>
</dbReference>
<dbReference type="GO" id="GO:0005634">
    <property type="term" value="C:nucleus"/>
    <property type="evidence" value="ECO:0000318"/>
    <property type="project" value="GO_Central"/>
</dbReference>
<dbReference type="GO" id="GO:0003677">
    <property type="term" value="F:DNA binding"/>
    <property type="evidence" value="ECO:0007669"/>
    <property type="project" value="UniProtKB-KW"/>
</dbReference>
<dbReference type="GO" id="GO:0046982">
    <property type="term" value="F:protein heterodimerization activity"/>
    <property type="evidence" value="ECO:0007669"/>
    <property type="project" value="InterPro"/>
</dbReference>
<dbReference type="GO" id="GO:0030527">
    <property type="term" value="F:structural constituent of chromatin"/>
    <property type="evidence" value="ECO:0000318"/>
    <property type="project" value="GO_Central"/>
</dbReference>
<dbReference type="GO" id="GO:0031507">
    <property type="term" value="P:heterochromatin formation"/>
    <property type="evidence" value="ECO:0000318"/>
    <property type="project" value="GO_Central"/>
</dbReference>
<dbReference type="CDD" id="cd00074">
    <property type="entry name" value="HFD_H2A"/>
    <property type="match status" value="1"/>
</dbReference>
<dbReference type="FunFam" id="1.10.20.10:FF:000103">
    <property type="entry name" value="Histone H2A type 1"/>
    <property type="match status" value="1"/>
</dbReference>
<dbReference type="Gene3D" id="1.10.20.10">
    <property type="entry name" value="Histone, subunit A"/>
    <property type="match status" value="1"/>
</dbReference>
<dbReference type="InterPro" id="IPR009072">
    <property type="entry name" value="Histone-fold"/>
</dbReference>
<dbReference type="InterPro" id="IPR002119">
    <property type="entry name" value="Histone_H2A"/>
</dbReference>
<dbReference type="InterPro" id="IPR007125">
    <property type="entry name" value="Histone_H2A/H2B/H3"/>
</dbReference>
<dbReference type="InterPro" id="IPR032454">
    <property type="entry name" value="Histone_H2A_C"/>
</dbReference>
<dbReference type="InterPro" id="IPR032458">
    <property type="entry name" value="Histone_H2A_CS"/>
</dbReference>
<dbReference type="PANTHER" id="PTHR23430">
    <property type="entry name" value="HISTONE H2A"/>
    <property type="match status" value="1"/>
</dbReference>
<dbReference type="Pfam" id="PF00125">
    <property type="entry name" value="Histone"/>
    <property type="match status" value="1"/>
</dbReference>
<dbReference type="Pfam" id="PF16211">
    <property type="entry name" value="Histone_H2A_C"/>
    <property type="match status" value="1"/>
</dbReference>
<dbReference type="PRINTS" id="PR00620">
    <property type="entry name" value="HISTONEH2A"/>
</dbReference>
<dbReference type="SMART" id="SM00414">
    <property type="entry name" value="H2A"/>
    <property type="match status" value="1"/>
</dbReference>
<dbReference type="SUPFAM" id="SSF47113">
    <property type="entry name" value="Histone-fold"/>
    <property type="match status" value="1"/>
</dbReference>
<dbReference type="PROSITE" id="PS00046">
    <property type="entry name" value="HISTONE_H2A"/>
    <property type="match status" value="1"/>
</dbReference>
<evidence type="ECO:0000250" key="1">
    <source>
        <dbReference type="UniProtKB" id="C0HKE1"/>
    </source>
</evidence>
<evidence type="ECO:0000250" key="2">
    <source>
        <dbReference type="UniProtKB" id="P0C0S5"/>
    </source>
</evidence>
<evidence type="ECO:0000250" key="3">
    <source>
        <dbReference type="UniProtKB" id="P0C0S8"/>
    </source>
</evidence>
<evidence type="ECO:0000250" key="4">
    <source>
        <dbReference type="UniProtKB" id="P0C0S9"/>
    </source>
</evidence>
<evidence type="ECO:0000250" key="5">
    <source>
        <dbReference type="UniProtKB" id="P22752"/>
    </source>
</evidence>
<evidence type="ECO:0000256" key="6">
    <source>
        <dbReference type="SAM" id="MobiDB-lite"/>
    </source>
</evidence>
<evidence type="ECO:0000269" key="7">
    <source>
    </source>
</evidence>
<evidence type="ECO:0000305" key="8"/>
<protein>
    <recommendedName>
        <fullName>Histone H2A type 1</fullName>
    </recommendedName>
</protein>
<feature type="initiator methionine" description="Removed" evidence="7">
    <location>
        <position position="1"/>
    </location>
</feature>
<feature type="chain" id="PRO_0000055275" description="Histone H2A type 1">
    <location>
        <begin position="2"/>
        <end position="130"/>
    </location>
</feature>
<feature type="region of interest" description="Disordered" evidence="6">
    <location>
        <begin position="1"/>
        <end position="22"/>
    </location>
</feature>
<feature type="compositionally biased region" description="Basic residues" evidence="6">
    <location>
        <begin position="7"/>
        <end position="19"/>
    </location>
</feature>
<feature type="modified residue" description="N-acetylserine" evidence="7">
    <location>
        <position position="2"/>
    </location>
</feature>
<feature type="modified residue" description="Phosphoserine; by RPS6KA5" evidence="3">
    <location>
        <position position="2"/>
    </location>
</feature>
<feature type="modified residue" description="Citrulline; alternate" evidence="3">
    <location>
        <position position="4"/>
    </location>
</feature>
<feature type="modified residue" description="Symmetric dimethylarginine; by PRMT5; alternate" evidence="5">
    <location>
        <position position="4"/>
    </location>
</feature>
<feature type="modified residue" description="N6-(2-hydroxyisobutyryl)lysine" evidence="3">
    <location>
        <position position="6"/>
    </location>
</feature>
<feature type="modified residue" description="N6-(2-hydroxyisobutyryl)lysine; alternate" evidence="3">
    <location>
        <position position="10"/>
    </location>
</feature>
<feature type="modified residue" description="N6-lactoyllysine; alternate" evidence="2">
    <location>
        <position position="10"/>
    </location>
</feature>
<feature type="modified residue" description="N6-succinyllysine; alternate" evidence="3">
    <location>
        <position position="10"/>
    </location>
</feature>
<feature type="modified residue" description="N6-(2-hydroxyisobutyryl)lysine; alternate" evidence="3">
    <location>
        <position position="37"/>
    </location>
</feature>
<feature type="modified residue" description="N6-(beta-hydroxybutyryl)lysine; alternate" evidence="1">
    <location>
        <position position="37"/>
    </location>
</feature>
<feature type="modified residue" description="N6-crotonyllysine; alternate" evidence="3">
    <location>
        <position position="37"/>
    </location>
</feature>
<feature type="modified residue" description="N6-(2-hydroxyisobutyryl)lysine" evidence="3">
    <location>
        <position position="75"/>
    </location>
</feature>
<feature type="modified residue" description="N6-(2-hydroxyisobutyryl)lysine" evidence="3">
    <location>
        <position position="76"/>
    </location>
</feature>
<feature type="modified residue" description="N6-(2-hydroxyisobutyryl)lysine; alternate" evidence="3">
    <location>
        <position position="96"/>
    </location>
</feature>
<feature type="modified residue" description="N6-glutaryllysine; alternate" evidence="3">
    <location>
        <position position="96"/>
    </location>
</feature>
<feature type="modified residue" description="N6-succinyllysine; alternate" evidence="3">
    <location>
        <position position="96"/>
    </location>
</feature>
<feature type="modified residue" description="N6-glutaryllysine" evidence="3">
    <location>
        <position position="100"/>
    </location>
</feature>
<feature type="modified residue" description="N5-methylglutamine" evidence="3">
    <location>
        <position position="105"/>
    </location>
</feature>
<feature type="modified residue" description="N6-(2-hydroxyisobutyryl)lysine; alternate" evidence="3">
    <location>
        <position position="119"/>
    </location>
</feature>
<feature type="modified residue" description="N6-crotonyllysine; alternate" evidence="3">
    <location>
        <position position="119"/>
    </location>
</feature>
<feature type="modified residue" description="N6-glutaryllysine; alternate" evidence="3">
    <location>
        <position position="119"/>
    </location>
</feature>
<feature type="modified residue" description="N6-crotonyllysine; alternate" evidence="3">
    <location>
        <position position="120"/>
    </location>
</feature>
<feature type="modified residue" description="N6-glutaryllysine; alternate" evidence="3">
    <location>
        <position position="120"/>
    </location>
</feature>
<feature type="modified residue" description="Phosphothreonine; by DCAF1" evidence="3">
    <location>
        <position position="121"/>
    </location>
</feature>
<feature type="modified residue" description="N6-crotonyllysine; alternate" evidence="3">
    <location>
        <position position="126"/>
    </location>
</feature>
<feature type="modified residue" description="N6-glutaryllysine; alternate" evidence="3">
    <location>
        <position position="126"/>
    </location>
</feature>
<feature type="cross-link" description="Glycyl lysine isopeptide (Lys-Gly) (interchain with G-Cter in ubiquitin)" evidence="3">
    <location>
        <position position="14"/>
    </location>
</feature>
<feature type="cross-link" description="Glycyl lysine isopeptide (Lys-Gly) (interchain with G-Cter in ubiquitin)" evidence="3">
    <location>
        <position position="16"/>
    </location>
</feature>
<feature type="cross-link" description="Glycyl lysine isopeptide (Lys-Gly) (interchain with G-Cter in ubiquitin); alternate" evidence="4">
    <location>
        <position position="120"/>
    </location>
</feature>
<keyword id="KW-0002">3D-structure</keyword>
<keyword id="KW-0007">Acetylation</keyword>
<keyword id="KW-0158">Chromosome</keyword>
<keyword id="KW-0164">Citrullination</keyword>
<keyword id="KW-0903">Direct protein sequencing</keyword>
<keyword id="KW-0238">DNA-binding</keyword>
<keyword id="KW-0379">Hydroxylation</keyword>
<keyword id="KW-1017">Isopeptide bond</keyword>
<keyword id="KW-0488">Methylation</keyword>
<keyword id="KW-0544">Nucleosome core</keyword>
<keyword id="KW-0539">Nucleus</keyword>
<keyword id="KW-0597">Phosphoprotein</keyword>
<keyword id="KW-1185">Reference proteome</keyword>
<keyword id="KW-0832">Ubl conjugation</keyword>
<comment type="function">
    <text>Core component of nucleosome. Nucleosomes wrap and compact DNA into chromatin, limiting DNA accessibility to the cellular machineries which require DNA as a template. Histones thereby play a central role in transcription regulation, DNA repair, DNA replication and chromosomal stability. DNA accessibility is regulated via a complex set of post-translational modifications of histones, also called histone code, and nucleosome remodeling.</text>
</comment>
<comment type="subunit">
    <text evidence="3">The nucleosome is a histone octamer containing two molecules each of H2A, H2B, H3 and H4 assembled in one H3-H4 heterotetramer and two H2A-H2B heterodimers. The octamer wraps approximately 147 bp of DNA. Interacts with VRK1; the interaction is mediated by the nucleosome acidic patch, a cluster of negatively charged residues of H2A and H2B forming a cleft within the nucleosome core (By similarity).</text>
</comment>
<comment type="subcellular location">
    <subcellularLocation>
        <location>Nucleus</location>
    </subcellularLocation>
    <subcellularLocation>
        <location>Chromosome</location>
    </subcellularLocation>
</comment>
<comment type="PTM">
    <text evidence="3">Deiminated on Arg-4 in granulocytes upon calcium entry.</text>
</comment>
<comment type="PTM">
    <text evidence="3">Monoubiquitination of Lys-120 (H2AK119Ub) by RING1, TRIM37 and RNF2/RING2 complex gives a specific tag for epigenetic transcriptional repression and participates in X chromosome inactivation of female mammals. It is involved in the initiation of both imprinted and random X inactivation. Ubiquitinated H2A is enriched in inactive X chromosome chromatin. Ubiquitination of H2A functions downstream of methylation of 'Lys-27' of histone H3 (H3K27me). H2AK119Ub by RNF2/RING2 can also be induced by ultraviolet and may be involved in DNA repair. Following DNA double-strand breaks (DSBs), it is ubiquitinated through 'Lys-63' linkage of ubiquitin moieties by the E2 ligase UBE2N and the E3 ligases RNF8 and RNF168, leading to the recruitment of repair proteins to sites of DNA damage. Ubiquitination at Lys-14 and Lys-16 (H2AK13Ub and H2AK15Ub, respectively) in response to DNA damage is initiated by RNF168 that mediates monoubiquitination at these 2 sites, and 'Lys-63'-linked ubiquitin are then conjugated to monoubiquitin; RNF8 is able to extend 'Lys-63'-linked ubiquitin chains in vitro. H2AK119Ub and ionizing radiation-induced 'Lys-63'-linked ubiquitination (H2AK13Ub and H2AK15Ub) are distinct events.</text>
</comment>
<comment type="PTM">
    <text evidence="3">Phosphorylation on Ser-2 (H2AS1ph) is enhanced during mitosis. Phosphorylation on Ser-2 by RPS6KA5/MSK1 directly represses transcription. Acetylation of H3 inhibits Ser-2 phosphorylation by RPS6KA5/MSK1. Phosphorylation at Thr-121 (H2AT120ph) by DCAF1 is present in the regulatory region of many tumor suppresor genes and down-regulates their transcription.</text>
</comment>
<comment type="PTM">
    <text evidence="5">Symmetric dimethylation on Arg-4 by the PRDM1/PRMT5 complex may play a crucial role in the germ-cell lineage.</text>
</comment>
<comment type="PTM">
    <text evidence="3">Glutamine methylation at Gln-105 (H2AQ104me) by FBL is specifically dedicated to polymerase I. It is present at 35S ribosomal DNA locus and impairs binding of the FACT complex.</text>
</comment>
<comment type="PTM">
    <text evidence="3">Crotonylation (Kcr) is specifically present in male germ cells and marks testis-specific genes in post-meiotic cells, including X-linked genes that escape sex chromosome inactivation in haploid cells. Crotonylation marks active promoters and enhancers and confers resistance to transcriptional repressors. It is also associated with post-meiotically activated genes on autosomes.</text>
</comment>
<comment type="PTM">
    <text evidence="2">Lactylated in macrophages by EP300/P300 by using lactoyl-CoA directly derived from endogenous or exogenous lactate, leading to stimulates gene transcription.</text>
</comment>
<comment type="similarity">
    <text evidence="8">Belongs to the histone H2A family.</text>
</comment>
<organism>
    <name type="scientific">Rattus norvegicus</name>
    <name type="common">Rat</name>
    <dbReference type="NCBI Taxonomy" id="10116"/>
    <lineage>
        <taxon>Eukaryota</taxon>
        <taxon>Metazoa</taxon>
        <taxon>Chordata</taxon>
        <taxon>Craniata</taxon>
        <taxon>Vertebrata</taxon>
        <taxon>Euteleostomi</taxon>
        <taxon>Mammalia</taxon>
        <taxon>Eutheria</taxon>
        <taxon>Euarchontoglires</taxon>
        <taxon>Glires</taxon>
        <taxon>Rodentia</taxon>
        <taxon>Myomorpha</taxon>
        <taxon>Muroidea</taxon>
        <taxon>Muridae</taxon>
        <taxon>Murinae</taxon>
        <taxon>Rattus</taxon>
    </lineage>
</organism>
<name>H2A1_RAT</name>
<reference key="1">
    <citation type="journal article" date="1976" name="Biochemistry">
        <title>Primary structure and microheterogeneities of rat chloroleukemia histone H2A (histone ALK, IIbl or F2a2).</title>
        <authorList>
            <person name="Laine B."/>
            <person name="Sautiere P."/>
            <person name="Biserte G."/>
        </authorList>
    </citation>
    <scope>PROTEIN SEQUENCE OF 2-130</scope>
    <scope>CLEAVAGE OF INITIATOR METHIONINE</scope>
    <scope>ACETYLATION AT SER-2</scope>
    <source>
        <tissue>Leukemia</tissue>
    </source>
</reference>
<proteinExistence type="evidence at protein level"/>